<protein>
    <recommendedName>
        <fullName evidence="1">Phenylalanine--tRNA ligase beta subunit</fullName>
        <ecNumber evidence="1">6.1.1.20</ecNumber>
    </recommendedName>
    <alternativeName>
        <fullName evidence="1">Phenylalanyl-tRNA synthetase beta subunit</fullName>
        <shortName evidence="1">PheRS</shortName>
    </alternativeName>
</protein>
<sequence length="807" mass="87402">MLVSLSWLKDLVQVDDSVDDLAERLSMAGFEVENIDDLSARSQGVVVGHVLTRDKHPNADKLSVCTVDIGAKESVQIVCGAANVRAGIHVPVATVGAVLPAVDLTIKAGELRGVASNGMICSLSELGLTAESSGIAILEDTTKEIPAVGTPVAALFGLDDAVLELAITANRPDGLSMVGIAREVAALTNAELSLPLLNHTPEQEPLQAELDGSYYAVACVEGVQGGQESPPWIQQRLNRAGINAVNAVVDITNLVMLEQGQPLHAFDAEALESLTGKPVDAASFAVRPAKDQETFIGLDDQSLCLDPRVQVVTCHDRAIAIAGVMGSRDSAVSDSTTKIWLESAMFSPIRVRQSSRAVGLRTDASSRFEKGLPPEVTLACSQRAIELLSDQFACRVNGRWVGGEGPRTPVPLQLRRDALHQLLGPIDTDSGPVDLADHTIEQCLTALGCELESTDEGWAVMTPPSRRQDLHREVDLIEEVARLVGFDKFGSHLPDPVSPGSLTSRQQAERRLRRLFCSTGLQEITTLSLVGSSDGDARIAISNPLLAETSHLRTNLWEEHLQICVRNLKASMAGCSIFEVGNTYSGTPESVVQSGIISGVICGDRRLERWSTSGKYQAPNYYEARGVLSRVMEALHLELSDRPLADDARLHPGRAATLVMEGRPLGCFGQLHPALADDLSLPESTYLFELDLERLLDATTRTNRWTPIYKSFPTVPASERDLAVVVDRNSNAADLIQAIRKAGKPLLEHVELIDRFEGDQLGDQKVSQAFRLRYRSQNETLTDDKIQPVHDKVRAALSKQFKAELRS</sequence>
<comment type="catalytic activity">
    <reaction evidence="1">
        <text>tRNA(Phe) + L-phenylalanine + ATP = L-phenylalanyl-tRNA(Phe) + AMP + diphosphate + H(+)</text>
        <dbReference type="Rhea" id="RHEA:19413"/>
        <dbReference type="Rhea" id="RHEA-COMP:9668"/>
        <dbReference type="Rhea" id="RHEA-COMP:9699"/>
        <dbReference type="ChEBI" id="CHEBI:15378"/>
        <dbReference type="ChEBI" id="CHEBI:30616"/>
        <dbReference type="ChEBI" id="CHEBI:33019"/>
        <dbReference type="ChEBI" id="CHEBI:58095"/>
        <dbReference type="ChEBI" id="CHEBI:78442"/>
        <dbReference type="ChEBI" id="CHEBI:78531"/>
        <dbReference type="ChEBI" id="CHEBI:456215"/>
        <dbReference type="EC" id="6.1.1.20"/>
    </reaction>
</comment>
<comment type="cofactor">
    <cofactor evidence="1">
        <name>Mg(2+)</name>
        <dbReference type="ChEBI" id="CHEBI:18420"/>
    </cofactor>
    <text evidence="1">Binds 2 magnesium ions per tetramer.</text>
</comment>
<comment type="subunit">
    <text evidence="1">Tetramer of two alpha and two beta subunits.</text>
</comment>
<comment type="subcellular location">
    <subcellularLocation>
        <location evidence="1">Cytoplasm</location>
    </subcellularLocation>
</comment>
<comment type="similarity">
    <text evidence="1">Belongs to the phenylalanyl-tRNA synthetase beta subunit family. Type 1 subfamily.</text>
</comment>
<gene>
    <name evidence="1" type="primary">pheT</name>
    <name type="ordered locus">Syncc9902_1135</name>
</gene>
<dbReference type="EC" id="6.1.1.20" evidence="1"/>
<dbReference type="EMBL" id="CP000097">
    <property type="protein sequence ID" value="ABB26099.1"/>
    <property type="molecule type" value="Genomic_DNA"/>
</dbReference>
<dbReference type="RefSeq" id="WP_011359928.1">
    <property type="nucleotide sequence ID" value="NC_007513.1"/>
</dbReference>
<dbReference type="SMR" id="Q3AVJ1"/>
<dbReference type="STRING" id="316279.Syncc9902_1135"/>
<dbReference type="KEGG" id="sye:Syncc9902_1135"/>
<dbReference type="eggNOG" id="COG0072">
    <property type="taxonomic scope" value="Bacteria"/>
</dbReference>
<dbReference type="HOGENOM" id="CLU_016891_0_0_3"/>
<dbReference type="OrthoDB" id="9805455at2"/>
<dbReference type="Proteomes" id="UP000002712">
    <property type="component" value="Chromosome"/>
</dbReference>
<dbReference type="GO" id="GO:0009328">
    <property type="term" value="C:phenylalanine-tRNA ligase complex"/>
    <property type="evidence" value="ECO:0007669"/>
    <property type="project" value="TreeGrafter"/>
</dbReference>
<dbReference type="GO" id="GO:0005524">
    <property type="term" value="F:ATP binding"/>
    <property type="evidence" value="ECO:0007669"/>
    <property type="project" value="UniProtKB-UniRule"/>
</dbReference>
<dbReference type="GO" id="GO:0000287">
    <property type="term" value="F:magnesium ion binding"/>
    <property type="evidence" value="ECO:0007669"/>
    <property type="project" value="UniProtKB-UniRule"/>
</dbReference>
<dbReference type="GO" id="GO:0004826">
    <property type="term" value="F:phenylalanine-tRNA ligase activity"/>
    <property type="evidence" value="ECO:0007669"/>
    <property type="project" value="UniProtKB-UniRule"/>
</dbReference>
<dbReference type="GO" id="GO:0000049">
    <property type="term" value="F:tRNA binding"/>
    <property type="evidence" value="ECO:0007669"/>
    <property type="project" value="UniProtKB-KW"/>
</dbReference>
<dbReference type="GO" id="GO:0006432">
    <property type="term" value="P:phenylalanyl-tRNA aminoacylation"/>
    <property type="evidence" value="ECO:0007669"/>
    <property type="project" value="UniProtKB-UniRule"/>
</dbReference>
<dbReference type="CDD" id="cd00769">
    <property type="entry name" value="PheRS_beta_core"/>
    <property type="match status" value="1"/>
</dbReference>
<dbReference type="CDD" id="cd02796">
    <property type="entry name" value="tRNA_bind_bactPheRS"/>
    <property type="match status" value="1"/>
</dbReference>
<dbReference type="FunFam" id="2.40.50.140:FF:000045">
    <property type="entry name" value="Phenylalanine--tRNA ligase beta subunit"/>
    <property type="match status" value="1"/>
</dbReference>
<dbReference type="FunFam" id="3.30.70.380:FF:000001">
    <property type="entry name" value="Phenylalanine--tRNA ligase beta subunit"/>
    <property type="match status" value="1"/>
</dbReference>
<dbReference type="Gene3D" id="3.30.56.10">
    <property type="match status" value="2"/>
</dbReference>
<dbReference type="Gene3D" id="3.30.930.10">
    <property type="entry name" value="Bira Bifunctional Protein, Domain 2"/>
    <property type="match status" value="1"/>
</dbReference>
<dbReference type="Gene3D" id="3.30.70.380">
    <property type="entry name" value="Ferrodoxin-fold anticodon-binding domain"/>
    <property type="match status" value="1"/>
</dbReference>
<dbReference type="Gene3D" id="2.40.50.140">
    <property type="entry name" value="Nucleic acid-binding proteins"/>
    <property type="match status" value="1"/>
</dbReference>
<dbReference type="Gene3D" id="3.50.40.10">
    <property type="entry name" value="Phenylalanyl-trna Synthetase, Chain B, domain 3"/>
    <property type="match status" value="1"/>
</dbReference>
<dbReference type="HAMAP" id="MF_00283">
    <property type="entry name" value="Phe_tRNA_synth_beta1"/>
    <property type="match status" value="1"/>
</dbReference>
<dbReference type="InterPro" id="IPR045864">
    <property type="entry name" value="aa-tRNA-synth_II/BPL/LPL"/>
</dbReference>
<dbReference type="InterPro" id="IPR005146">
    <property type="entry name" value="B3/B4_tRNA-bd"/>
</dbReference>
<dbReference type="InterPro" id="IPR009061">
    <property type="entry name" value="DNA-bd_dom_put_sf"/>
</dbReference>
<dbReference type="InterPro" id="IPR005121">
    <property type="entry name" value="Fdx_antiC-bd"/>
</dbReference>
<dbReference type="InterPro" id="IPR036690">
    <property type="entry name" value="Fdx_antiC-bd_sf"/>
</dbReference>
<dbReference type="InterPro" id="IPR012340">
    <property type="entry name" value="NA-bd_OB-fold"/>
</dbReference>
<dbReference type="InterPro" id="IPR045060">
    <property type="entry name" value="Phe-tRNA-ligase_IIc_bsu"/>
</dbReference>
<dbReference type="InterPro" id="IPR004532">
    <property type="entry name" value="Phe-tRNA-ligase_IIc_bsu_bact"/>
</dbReference>
<dbReference type="InterPro" id="IPR020825">
    <property type="entry name" value="Phe-tRNA_synthase-like_B3/B4"/>
</dbReference>
<dbReference type="InterPro" id="IPR041616">
    <property type="entry name" value="PheRS_beta_core"/>
</dbReference>
<dbReference type="InterPro" id="IPR002547">
    <property type="entry name" value="tRNA-bd_dom"/>
</dbReference>
<dbReference type="InterPro" id="IPR033714">
    <property type="entry name" value="tRNA_bind_bactPheRS"/>
</dbReference>
<dbReference type="InterPro" id="IPR005147">
    <property type="entry name" value="tRNA_synthase_B5-dom"/>
</dbReference>
<dbReference type="NCBIfam" id="TIGR00472">
    <property type="entry name" value="pheT_bact"/>
    <property type="match status" value="1"/>
</dbReference>
<dbReference type="NCBIfam" id="NF045760">
    <property type="entry name" value="YtpR"/>
    <property type="match status" value="1"/>
</dbReference>
<dbReference type="PANTHER" id="PTHR10947:SF0">
    <property type="entry name" value="PHENYLALANINE--TRNA LIGASE BETA SUBUNIT"/>
    <property type="match status" value="1"/>
</dbReference>
<dbReference type="PANTHER" id="PTHR10947">
    <property type="entry name" value="PHENYLALANYL-TRNA SYNTHETASE BETA CHAIN AND LEUCINE-RICH REPEAT-CONTAINING PROTEIN 47"/>
    <property type="match status" value="1"/>
</dbReference>
<dbReference type="Pfam" id="PF03483">
    <property type="entry name" value="B3_4"/>
    <property type="match status" value="1"/>
</dbReference>
<dbReference type="Pfam" id="PF03484">
    <property type="entry name" value="B5"/>
    <property type="match status" value="1"/>
</dbReference>
<dbReference type="Pfam" id="PF03147">
    <property type="entry name" value="FDX-ACB"/>
    <property type="match status" value="1"/>
</dbReference>
<dbReference type="Pfam" id="PF01588">
    <property type="entry name" value="tRNA_bind"/>
    <property type="match status" value="1"/>
</dbReference>
<dbReference type="Pfam" id="PF17759">
    <property type="entry name" value="tRNA_synthFbeta"/>
    <property type="match status" value="1"/>
</dbReference>
<dbReference type="SMART" id="SM00873">
    <property type="entry name" value="B3_4"/>
    <property type="match status" value="1"/>
</dbReference>
<dbReference type="SMART" id="SM00874">
    <property type="entry name" value="B5"/>
    <property type="match status" value="1"/>
</dbReference>
<dbReference type="SMART" id="SM00896">
    <property type="entry name" value="FDX-ACB"/>
    <property type="match status" value="1"/>
</dbReference>
<dbReference type="SUPFAM" id="SSF54991">
    <property type="entry name" value="Anticodon-binding domain of PheRS"/>
    <property type="match status" value="1"/>
</dbReference>
<dbReference type="SUPFAM" id="SSF55681">
    <property type="entry name" value="Class II aaRS and biotin synthetases"/>
    <property type="match status" value="1"/>
</dbReference>
<dbReference type="SUPFAM" id="SSF50249">
    <property type="entry name" value="Nucleic acid-binding proteins"/>
    <property type="match status" value="1"/>
</dbReference>
<dbReference type="SUPFAM" id="SSF56037">
    <property type="entry name" value="PheT/TilS domain"/>
    <property type="match status" value="1"/>
</dbReference>
<dbReference type="SUPFAM" id="SSF46955">
    <property type="entry name" value="Putative DNA-binding domain"/>
    <property type="match status" value="1"/>
</dbReference>
<dbReference type="PROSITE" id="PS51483">
    <property type="entry name" value="B5"/>
    <property type="match status" value="1"/>
</dbReference>
<dbReference type="PROSITE" id="PS51447">
    <property type="entry name" value="FDX_ACB"/>
    <property type="match status" value="1"/>
</dbReference>
<dbReference type="PROSITE" id="PS50886">
    <property type="entry name" value="TRBD"/>
    <property type="match status" value="1"/>
</dbReference>
<proteinExistence type="inferred from homology"/>
<accession>Q3AVJ1</accession>
<name>SYFB_SYNS9</name>
<organism>
    <name type="scientific">Synechococcus sp. (strain CC9902)</name>
    <dbReference type="NCBI Taxonomy" id="316279"/>
    <lineage>
        <taxon>Bacteria</taxon>
        <taxon>Bacillati</taxon>
        <taxon>Cyanobacteriota</taxon>
        <taxon>Cyanophyceae</taxon>
        <taxon>Synechococcales</taxon>
        <taxon>Synechococcaceae</taxon>
        <taxon>Synechococcus</taxon>
    </lineage>
</organism>
<evidence type="ECO:0000255" key="1">
    <source>
        <dbReference type="HAMAP-Rule" id="MF_00283"/>
    </source>
</evidence>
<keyword id="KW-0030">Aminoacyl-tRNA synthetase</keyword>
<keyword id="KW-0067">ATP-binding</keyword>
<keyword id="KW-0963">Cytoplasm</keyword>
<keyword id="KW-0436">Ligase</keyword>
<keyword id="KW-0460">Magnesium</keyword>
<keyword id="KW-0479">Metal-binding</keyword>
<keyword id="KW-0547">Nucleotide-binding</keyword>
<keyword id="KW-0648">Protein biosynthesis</keyword>
<keyword id="KW-1185">Reference proteome</keyword>
<keyword id="KW-0694">RNA-binding</keyword>
<keyword id="KW-0820">tRNA-binding</keyword>
<reference key="1">
    <citation type="submission" date="2005-08" db="EMBL/GenBank/DDBJ databases">
        <title>Complete sequence of Synechococcus sp. CC9902.</title>
        <authorList>
            <person name="Copeland A."/>
            <person name="Lucas S."/>
            <person name="Lapidus A."/>
            <person name="Barry K."/>
            <person name="Detter J.C."/>
            <person name="Glavina T."/>
            <person name="Hammon N."/>
            <person name="Israni S."/>
            <person name="Pitluck S."/>
            <person name="Martinez M."/>
            <person name="Schmutz J."/>
            <person name="Larimer F."/>
            <person name="Land M."/>
            <person name="Kyrpides N."/>
            <person name="Ivanova N."/>
            <person name="Richardson P."/>
        </authorList>
    </citation>
    <scope>NUCLEOTIDE SEQUENCE [LARGE SCALE GENOMIC DNA]</scope>
    <source>
        <strain>CC9902</strain>
    </source>
</reference>
<feature type="chain" id="PRO_0000232824" description="Phenylalanine--tRNA ligase beta subunit">
    <location>
        <begin position="1"/>
        <end position="807"/>
    </location>
</feature>
<feature type="domain" description="tRNA-binding" evidence="1">
    <location>
        <begin position="39"/>
        <end position="153"/>
    </location>
</feature>
<feature type="domain" description="B5" evidence="1">
    <location>
        <begin position="407"/>
        <end position="491"/>
    </location>
</feature>
<feature type="domain" description="FDX-ACB" evidence="1">
    <location>
        <begin position="713"/>
        <end position="806"/>
    </location>
</feature>
<feature type="binding site" evidence="1">
    <location>
        <position position="469"/>
    </location>
    <ligand>
        <name>Mg(2+)</name>
        <dbReference type="ChEBI" id="CHEBI:18420"/>
        <note>shared with alpha subunit</note>
    </ligand>
</feature>
<feature type="binding site" evidence="1">
    <location>
        <position position="475"/>
    </location>
    <ligand>
        <name>Mg(2+)</name>
        <dbReference type="ChEBI" id="CHEBI:18420"/>
        <note>shared with alpha subunit</note>
    </ligand>
</feature>
<feature type="binding site" evidence="1">
    <location>
        <position position="478"/>
    </location>
    <ligand>
        <name>Mg(2+)</name>
        <dbReference type="ChEBI" id="CHEBI:18420"/>
        <note>shared with alpha subunit</note>
    </ligand>
</feature>
<feature type="binding site" evidence="1">
    <location>
        <position position="479"/>
    </location>
    <ligand>
        <name>Mg(2+)</name>
        <dbReference type="ChEBI" id="CHEBI:18420"/>
        <note>shared with alpha subunit</note>
    </ligand>
</feature>